<evidence type="ECO:0000250" key="1"/>
<evidence type="ECO:0000255" key="2"/>
<evidence type="ECO:0000256" key="3">
    <source>
        <dbReference type="SAM" id="MobiDB-lite"/>
    </source>
</evidence>
<evidence type="ECO:0000305" key="4"/>
<name>NST1_ASPTN</name>
<keyword id="KW-0175">Coiled coil</keyword>
<keyword id="KW-0963">Cytoplasm</keyword>
<keyword id="KW-1185">Reference proteome</keyword>
<keyword id="KW-0346">Stress response</keyword>
<dbReference type="EMBL" id="CH476599">
    <property type="protein sequence ID" value="EAU35016.1"/>
    <property type="molecule type" value="Genomic_DNA"/>
</dbReference>
<dbReference type="RefSeq" id="XP_001213747.1">
    <property type="nucleotide sequence ID" value="XM_001213747.1"/>
</dbReference>
<dbReference type="SMR" id="Q0CP15"/>
<dbReference type="STRING" id="341663.Q0CP15"/>
<dbReference type="EnsemblFungi" id="EAU35016">
    <property type="protein sequence ID" value="EAU35016"/>
    <property type="gene ID" value="ATEG_04569"/>
</dbReference>
<dbReference type="GeneID" id="4320175"/>
<dbReference type="VEuPathDB" id="FungiDB:ATEG_04569"/>
<dbReference type="eggNOG" id="ENOG502QSSK">
    <property type="taxonomic scope" value="Eukaryota"/>
</dbReference>
<dbReference type="HOGENOM" id="CLU_002935_0_0_1"/>
<dbReference type="OMA" id="EEDTQYG"/>
<dbReference type="OrthoDB" id="21629at2759"/>
<dbReference type="Proteomes" id="UP000007963">
    <property type="component" value="Unassembled WGS sequence"/>
</dbReference>
<dbReference type="GO" id="GO:0005737">
    <property type="term" value="C:cytoplasm"/>
    <property type="evidence" value="ECO:0007669"/>
    <property type="project" value="UniProtKB-SubCell"/>
</dbReference>
<dbReference type="InterPro" id="IPR051195">
    <property type="entry name" value="Fungal_stress_NST1"/>
</dbReference>
<dbReference type="InterPro" id="IPR025279">
    <property type="entry name" value="NST1"/>
</dbReference>
<dbReference type="PANTHER" id="PTHR31780:SF10">
    <property type="entry name" value="LD36051P"/>
    <property type="match status" value="1"/>
</dbReference>
<dbReference type="PANTHER" id="PTHR31780">
    <property type="entry name" value="STRESS RESPONSE PROTEIN NST1-RELATED"/>
    <property type="match status" value="1"/>
</dbReference>
<dbReference type="Pfam" id="PF13945">
    <property type="entry name" value="NST1"/>
    <property type="match status" value="1"/>
</dbReference>
<proteinExistence type="inferred from homology"/>
<organism>
    <name type="scientific">Aspergillus terreus (strain NIH 2624 / FGSC A1156)</name>
    <dbReference type="NCBI Taxonomy" id="341663"/>
    <lineage>
        <taxon>Eukaryota</taxon>
        <taxon>Fungi</taxon>
        <taxon>Dikarya</taxon>
        <taxon>Ascomycota</taxon>
        <taxon>Pezizomycotina</taxon>
        <taxon>Eurotiomycetes</taxon>
        <taxon>Eurotiomycetidae</taxon>
        <taxon>Eurotiales</taxon>
        <taxon>Aspergillaceae</taxon>
        <taxon>Aspergillus</taxon>
        <taxon>Aspergillus subgen. Circumdati</taxon>
    </lineage>
</organism>
<protein>
    <recommendedName>
        <fullName>Stress response protein nst1</fullName>
    </recommendedName>
</protein>
<comment type="function">
    <text evidence="1">May act as a negative regulator of salt tolerance.</text>
</comment>
<comment type="subcellular location">
    <subcellularLocation>
        <location evidence="1">Cytoplasm</location>
    </subcellularLocation>
</comment>
<comment type="similarity">
    <text evidence="4">Belongs to the NST1 family.</text>
</comment>
<reference key="1">
    <citation type="submission" date="2005-09" db="EMBL/GenBank/DDBJ databases">
        <title>Annotation of the Aspergillus terreus NIH2624 genome.</title>
        <authorList>
            <person name="Birren B.W."/>
            <person name="Lander E.S."/>
            <person name="Galagan J.E."/>
            <person name="Nusbaum C."/>
            <person name="Devon K."/>
            <person name="Henn M."/>
            <person name="Ma L.-J."/>
            <person name="Jaffe D.B."/>
            <person name="Butler J."/>
            <person name="Alvarez P."/>
            <person name="Gnerre S."/>
            <person name="Grabherr M."/>
            <person name="Kleber M."/>
            <person name="Mauceli E.W."/>
            <person name="Brockman W."/>
            <person name="Rounsley S."/>
            <person name="Young S.K."/>
            <person name="LaButti K."/>
            <person name="Pushparaj V."/>
            <person name="DeCaprio D."/>
            <person name="Crawford M."/>
            <person name="Koehrsen M."/>
            <person name="Engels R."/>
            <person name="Montgomery P."/>
            <person name="Pearson M."/>
            <person name="Howarth C."/>
            <person name="Larson L."/>
            <person name="Luoma S."/>
            <person name="White J."/>
            <person name="Alvarado L."/>
            <person name="Kodira C.D."/>
            <person name="Zeng Q."/>
            <person name="Oleary S."/>
            <person name="Yandava C."/>
            <person name="Denning D.W."/>
            <person name="Nierman W.C."/>
            <person name="Milne T."/>
            <person name="Madden K."/>
        </authorList>
    </citation>
    <scope>NUCLEOTIDE SEQUENCE [LARGE SCALE GENOMIC DNA]</scope>
    <source>
        <strain>NIH 2624 / FGSC A1156</strain>
    </source>
</reference>
<gene>
    <name type="primary">nst1</name>
    <name type="ORF">ATEG_04569</name>
</gene>
<sequence length="1129" mass="124829">MAPSQHPKSAAAPATTSDQMSTASSRPTNGTAHTSAETAYPSSMTDSKPTQSGPGSRASDEQDADEAYSNHSEQHMDHSNPDGHPSKPSGRKKKKKAKKGRAGSQTLGDESSTPLSTPSVSMSHPLPPPLPPHLGTRTILKSAKDRSIWNTSTQEERENIKTFWLELGEEERRQLVKVEKDAVLKKMKEQQKHSCSCTVCGRKRTAIEEELEVLYDAYYEELEQYANNNQGSFEKGSPIVPPPRLYQPPLRSPGQHTRTQGQFHPSRGRIHEITEDEEDLEEDYDDEEEDDDEPYSDDEFEDEETRAARADFFAFGNSLTVKDGILTVADDLLKNDGKHFIDMMEQLAERRMQREEDTQYNIAAAHQSLHSGHNHPPYDEEDYDDEEDEEYDSQEEDDYDEDEMDTMTEEQRMEEGRRMFQIFAARMFEQRVLTAYREKVAEQRQQKLIEELMEEQTRTEQKNAKKAREAEKRKEKKRLQKQAKEEEKARREAEKAAEEAAAKAEQEKKLEEQRRKREEQRKKREAERKAQEEERARKEAEKQRRLREERERQAEAERKHREQKEQEKKKREEARRKEREERELREKKAKEERERKAQEDQKKANQETPETKRTSHLGPVPIPANLQPQGSSSHLQSPHLQSASPAVPKAPTPAKARQPSQQGSHGSSPRSQQASTEPFHTSISPRSMAPSQSSGASSVASKQGYGQQPMLHHPQPSTPLSPLGSVNRSLPPGFASAGLPSNPPGLPGMVPRPPIGHELPTYPPHSGPLMNQLRGFPAPNGIPIPPGINGTRPLAPGRGFPLEAAPGLPFHTQQPIAGAFASHQGGMSHGHSRQPSGSFERSPLEPHAQPFPISRPSPIKRPPSTQQEQSDANRATQRDVDNLSAQLGSSALLDDTDIPFTSNLSQSLPGATAPGSLPGPTRASFGAPSLFPDPLASKPGGFPMGPGVGANTWGTQIPFVSSAFPGAPAWGTAHGSGWSNNAFGSGGHHRAHTSRPVAIRLLVIQACKQLDTMSSSKAGSGYHDVKIVLQQVEQLRPSNEPSIPLKEMLDICDTEGNTQNGGGSFSIKKDETGEFVKFEPDNNSAASGHRGSIVPGEIGSPVPSSSMPAFGGIGNTPSVLRQFSSPTGF</sequence>
<feature type="chain" id="PRO_0000324442" description="Stress response protein nst1">
    <location>
        <begin position="1"/>
        <end position="1129"/>
    </location>
</feature>
<feature type="region of interest" description="Disordered" evidence="3">
    <location>
        <begin position="1"/>
        <end position="136"/>
    </location>
</feature>
<feature type="region of interest" description="Disordered" evidence="3">
    <location>
        <begin position="229"/>
        <end position="307"/>
    </location>
</feature>
<feature type="region of interest" description="Disordered" evidence="3">
    <location>
        <begin position="361"/>
        <end position="413"/>
    </location>
</feature>
<feature type="region of interest" description="Disordered" evidence="3">
    <location>
        <begin position="453"/>
        <end position="879"/>
    </location>
</feature>
<feature type="region of interest" description="Disordered" evidence="3">
    <location>
        <begin position="903"/>
        <end position="937"/>
    </location>
</feature>
<feature type="coiled-coil region" evidence="2">
    <location>
        <begin position="441"/>
        <end position="608"/>
    </location>
</feature>
<feature type="compositionally biased region" description="Polar residues" evidence="3">
    <location>
        <begin position="14"/>
        <end position="54"/>
    </location>
</feature>
<feature type="compositionally biased region" description="Basic and acidic residues" evidence="3">
    <location>
        <begin position="72"/>
        <end position="85"/>
    </location>
</feature>
<feature type="compositionally biased region" description="Basic residues" evidence="3">
    <location>
        <begin position="89"/>
        <end position="101"/>
    </location>
</feature>
<feature type="compositionally biased region" description="Polar residues" evidence="3">
    <location>
        <begin position="103"/>
        <end position="122"/>
    </location>
</feature>
<feature type="compositionally biased region" description="Polar residues" evidence="3">
    <location>
        <begin position="254"/>
        <end position="263"/>
    </location>
</feature>
<feature type="compositionally biased region" description="Acidic residues" evidence="3">
    <location>
        <begin position="274"/>
        <end position="304"/>
    </location>
</feature>
<feature type="compositionally biased region" description="Acidic residues" evidence="3">
    <location>
        <begin position="379"/>
        <end position="408"/>
    </location>
</feature>
<feature type="compositionally biased region" description="Basic and acidic residues" evidence="3">
    <location>
        <begin position="453"/>
        <end position="473"/>
    </location>
</feature>
<feature type="compositionally biased region" description="Basic and acidic residues" evidence="3">
    <location>
        <begin position="482"/>
        <end position="613"/>
    </location>
</feature>
<feature type="compositionally biased region" description="Low complexity" evidence="3">
    <location>
        <begin position="626"/>
        <end position="673"/>
    </location>
</feature>
<feature type="compositionally biased region" description="Polar residues" evidence="3">
    <location>
        <begin position="674"/>
        <end position="685"/>
    </location>
</feature>
<feature type="compositionally biased region" description="Low complexity" evidence="3">
    <location>
        <begin position="687"/>
        <end position="701"/>
    </location>
</feature>
<feature type="compositionally biased region" description="Polar residues" evidence="3">
    <location>
        <begin position="718"/>
        <end position="728"/>
    </location>
</feature>
<feature type="compositionally biased region" description="Pro residues" evidence="3">
    <location>
        <begin position="741"/>
        <end position="754"/>
    </location>
</feature>
<feature type="compositionally biased region" description="Polar residues" evidence="3">
    <location>
        <begin position="865"/>
        <end position="875"/>
    </location>
</feature>
<accession>Q0CP15</accession>